<reference key="1">
    <citation type="journal article" date="2004" name="Proc. Natl. Acad. Sci. U.S.A.">
        <title>Genomic plasticity of the causative agent of melioidosis, Burkholderia pseudomallei.</title>
        <authorList>
            <person name="Holden M.T.G."/>
            <person name="Titball R.W."/>
            <person name="Peacock S.J."/>
            <person name="Cerdeno-Tarraga A.-M."/>
            <person name="Atkins T."/>
            <person name="Crossman L.C."/>
            <person name="Pitt T."/>
            <person name="Churcher C."/>
            <person name="Mungall K.L."/>
            <person name="Bentley S.D."/>
            <person name="Sebaihia M."/>
            <person name="Thomson N.R."/>
            <person name="Bason N."/>
            <person name="Beacham I.R."/>
            <person name="Brooks K."/>
            <person name="Brown K.A."/>
            <person name="Brown N.F."/>
            <person name="Challis G.L."/>
            <person name="Cherevach I."/>
            <person name="Chillingworth T."/>
            <person name="Cronin A."/>
            <person name="Crossett B."/>
            <person name="Davis P."/>
            <person name="DeShazer D."/>
            <person name="Feltwell T."/>
            <person name="Fraser A."/>
            <person name="Hance Z."/>
            <person name="Hauser H."/>
            <person name="Holroyd S."/>
            <person name="Jagels K."/>
            <person name="Keith K.E."/>
            <person name="Maddison M."/>
            <person name="Moule S."/>
            <person name="Price C."/>
            <person name="Quail M.A."/>
            <person name="Rabbinowitsch E."/>
            <person name="Rutherford K."/>
            <person name="Sanders M."/>
            <person name="Simmonds M."/>
            <person name="Songsivilai S."/>
            <person name="Stevens K."/>
            <person name="Tumapa S."/>
            <person name="Vesaratchavest M."/>
            <person name="Whitehead S."/>
            <person name="Yeats C."/>
            <person name="Barrell B.G."/>
            <person name="Oyston P.C.F."/>
            <person name="Parkhill J."/>
        </authorList>
    </citation>
    <scope>NUCLEOTIDE SEQUENCE [LARGE SCALE GENOMIC DNA]</scope>
    <source>
        <strain>K96243</strain>
    </source>
</reference>
<feature type="chain" id="PRO_0000291075" description="UPF0434 protein BPSL0877">
    <location>
        <begin position="1"/>
        <end position="68"/>
    </location>
</feature>
<evidence type="ECO:0000255" key="1">
    <source>
        <dbReference type="HAMAP-Rule" id="MF_01187"/>
    </source>
</evidence>
<protein>
    <recommendedName>
        <fullName evidence="1">UPF0434 protein BPSL0877</fullName>
    </recommendedName>
</protein>
<sequence>MDARLLEILVCPICKGPLHYDRGAQELVCHADKLAYPIRDGIPVMLVDEARQTVEGTPVDPAGPARGR</sequence>
<organism>
    <name type="scientific">Burkholderia pseudomallei (strain K96243)</name>
    <dbReference type="NCBI Taxonomy" id="272560"/>
    <lineage>
        <taxon>Bacteria</taxon>
        <taxon>Pseudomonadati</taxon>
        <taxon>Pseudomonadota</taxon>
        <taxon>Betaproteobacteria</taxon>
        <taxon>Burkholderiales</taxon>
        <taxon>Burkholderiaceae</taxon>
        <taxon>Burkholderia</taxon>
        <taxon>pseudomallei group</taxon>
    </lineage>
</organism>
<proteinExistence type="inferred from homology"/>
<name>Y877_BURPS</name>
<accession>Q63WL4</accession>
<gene>
    <name type="ordered locus">BPSL0877</name>
</gene>
<keyword id="KW-1185">Reference proteome</keyword>
<comment type="similarity">
    <text evidence="1">Belongs to the UPF0434 family.</text>
</comment>
<dbReference type="EMBL" id="BX571965">
    <property type="protein sequence ID" value="CAH34869.1"/>
    <property type="molecule type" value="Genomic_DNA"/>
</dbReference>
<dbReference type="RefSeq" id="WP_004196455.1">
    <property type="nucleotide sequence ID" value="NZ_CP009538.1"/>
</dbReference>
<dbReference type="RefSeq" id="YP_107502.1">
    <property type="nucleotide sequence ID" value="NC_006350.1"/>
</dbReference>
<dbReference type="SMR" id="Q63WL4"/>
<dbReference type="STRING" id="272560.BPSL0877"/>
<dbReference type="KEGG" id="bps:BPSL0877"/>
<dbReference type="PATRIC" id="fig|272560.51.peg.719"/>
<dbReference type="eggNOG" id="COG2835">
    <property type="taxonomic scope" value="Bacteria"/>
</dbReference>
<dbReference type="Proteomes" id="UP000000605">
    <property type="component" value="Chromosome 1"/>
</dbReference>
<dbReference type="GO" id="GO:0005829">
    <property type="term" value="C:cytosol"/>
    <property type="evidence" value="ECO:0007669"/>
    <property type="project" value="TreeGrafter"/>
</dbReference>
<dbReference type="FunFam" id="2.20.25.10:FF:000002">
    <property type="entry name" value="UPF0434 protein YcaR"/>
    <property type="match status" value="1"/>
</dbReference>
<dbReference type="Gene3D" id="2.20.25.10">
    <property type="match status" value="1"/>
</dbReference>
<dbReference type="HAMAP" id="MF_01187">
    <property type="entry name" value="UPF0434"/>
    <property type="match status" value="1"/>
</dbReference>
<dbReference type="InterPro" id="IPR005651">
    <property type="entry name" value="Trm112-like"/>
</dbReference>
<dbReference type="NCBIfam" id="TIGR01053">
    <property type="entry name" value="LSD1"/>
    <property type="match status" value="1"/>
</dbReference>
<dbReference type="PANTHER" id="PTHR33505:SF4">
    <property type="entry name" value="PROTEIN PREY, MITOCHONDRIAL"/>
    <property type="match status" value="1"/>
</dbReference>
<dbReference type="PANTHER" id="PTHR33505">
    <property type="entry name" value="ZGC:162634"/>
    <property type="match status" value="1"/>
</dbReference>
<dbReference type="Pfam" id="PF03966">
    <property type="entry name" value="Trm112p"/>
    <property type="match status" value="1"/>
</dbReference>
<dbReference type="SUPFAM" id="SSF158997">
    <property type="entry name" value="Trm112p-like"/>
    <property type="match status" value="1"/>
</dbReference>